<name>PDUU_SALTI</name>
<proteinExistence type="inferred from homology"/>
<dbReference type="EMBL" id="AL513382">
    <property type="protein sequence ID" value="CAD02416.1"/>
    <property type="molecule type" value="Genomic_DNA"/>
</dbReference>
<dbReference type="EMBL" id="AE014613">
    <property type="protein sequence ID" value="AAO68508.1"/>
    <property type="molecule type" value="Genomic_DNA"/>
</dbReference>
<dbReference type="RefSeq" id="NP_456604.1">
    <property type="nucleotide sequence ID" value="NC_003198.1"/>
</dbReference>
<dbReference type="RefSeq" id="WP_000441103.1">
    <property type="nucleotide sequence ID" value="NZ_WSUR01000002.1"/>
</dbReference>
<dbReference type="SMR" id="P0A1D2"/>
<dbReference type="STRING" id="220341.gene:17586171"/>
<dbReference type="GeneID" id="97393738"/>
<dbReference type="KEGG" id="stt:t0819"/>
<dbReference type="KEGG" id="sty:STY2260"/>
<dbReference type="PATRIC" id="fig|220341.7.peg.2279"/>
<dbReference type="eggNOG" id="COG4810">
    <property type="taxonomic scope" value="Bacteria"/>
</dbReference>
<dbReference type="HOGENOM" id="CLU_143326_0_0_6"/>
<dbReference type="OMA" id="HIIPNPQ"/>
<dbReference type="OrthoDB" id="5457140at2"/>
<dbReference type="UniPathway" id="UPA00621"/>
<dbReference type="Proteomes" id="UP000000541">
    <property type="component" value="Chromosome"/>
</dbReference>
<dbReference type="Proteomes" id="UP000002670">
    <property type="component" value="Chromosome"/>
</dbReference>
<dbReference type="GO" id="GO:0031469">
    <property type="term" value="C:bacterial microcompartment"/>
    <property type="evidence" value="ECO:0007669"/>
    <property type="project" value="UniProtKB-SubCell"/>
</dbReference>
<dbReference type="GO" id="GO:0051144">
    <property type="term" value="P:propanediol catabolic process"/>
    <property type="evidence" value="ECO:0007669"/>
    <property type="project" value="UniProtKB-UniPathway"/>
</dbReference>
<dbReference type="CDD" id="cd07046">
    <property type="entry name" value="BMC_PduU-EutS"/>
    <property type="match status" value="1"/>
</dbReference>
<dbReference type="Gene3D" id="3.30.70.1710">
    <property type="match status" value="1"/>
</dbReference>
<dbReference type="InterPro" id="IPR044870">
    <property type="entry name" value="BMC_CP"/>
</dbReference>
<dbReference type="InterPro" id="IPR000249">
    <property type="entry name" value="BMC_dom"/>
</dbReference>
<dbReference type="InterPro" id="IPR037233">
    <property type="entry name" value="CcmK-like_sf"/>
</dbReference>
<dbReference type="InterPro" id="IPR009307">
    <property type="entry name" value="EutS/PduU/CutR"/>
</dbReference>
<dbReference type="NCBIfam" id="NF012012">
    <property type="entry name" value="PRK15468.1"/>
    <property type="match status" value="1"/>
</dbReference>
<dbReference type="PANTHER" id="PTHR40449:SF2">
    <property type="entry name" value="BACTERIAL MICROCOMPARTMENT SHELL PROTEIN EUTS"/>
    <property type="match status" value="1"/>
</dbReference>
<dbReference type="PANTHER" id="PTHR40449">
    <property type="entry name" value="ETHANOLAMINE UTILIZATION PROTEIN EUTS"/>
    <property type="match status" value="1"/>
</dbReference>
<dbReference type="Pfam" id="PF00936">
    <property type="entry name" value="BMC"/>
    <property type="match status" value="1"/>
</dbReference>
<dbReference type="PIRSF" id="PIRSF012296">
    <property type="entry name" value="EutS_PduU"/>
    <property type="match status" value="1"/>
</dbReference>
<dbReference type="SMART" id="SM00877">
    <property type="entry name" value="BMC"/>
    <property type="match status" value="1"/>
</dbReference>
<dbReference type="SUPFAM" id="SSF143414">
    <property type="entry name" value="CcmK-like"/>
    <property type="match status" value="1"/>
</dbReference>
<dbReference type="PROSITE" id="PS51931">
    <property type="entry name" value="BMC_CP"/>
    <property type="match status" value="1"/>
</dbReference>
<reference key="1">
    <citation type="journal article" date="2001" name="Nature">
        <title>Complete genome sequence of a multiple drug resistant Salmonella enterica serovar Typhi CT18.</title>
        <authorList>
            <person name="Parkhill J."/>
            <person name="Dougan G."/>
            <person name="James K.D."/>
            <person name="Thomson N.R."/>
            <person name="Pickard D."/>
            <person name="Wain J."/>
            <person name="Churcher C.M."/>
            <person name="Mungall K.L."/>
            <person name="Bentley S.D."/>
            <person name="Holden M.T.G."/>
            <person name="Sebaihia M."/>
            <person name="Baker S."/>
            <person name="Basham D."/>
            <person name="Brooks K."/>
            <person name="Chillingworth T."/>
            <person name="Connerton P."/>
            <person name="Cronin A."/>
            <person name="Davis P."/>
            <person name="Davies R.M."/>
            <person name="Dowd L."/>
            <person name="White N."/>
            <person name="Farrar J."/>
            <person name="Feltwell T."/>
            <person name="Hamlin N."/>
            <person name="Haque A."/>
            <person name="Hien T.T."/>
            <person name="Holroyd S."/>
            <person name="Jagels K."/>
            <person name="Krogh A."/>
            <person name="Larsen T.S."/>
            <person name="Leather S."/>
            <person name="Moule S."/>
            <person name="O'Gaora P."/>
            <person name="Parry C."/>
            <person name="Quail M.A."/>
            <person name="Rutherford K.M."/>
            <person name="Simmonds M."/>
            <person name="Skelton J."/>
            <person name="Stevens K."/>
            <person name="Whitehead S."/>
            <person name="Barrell B.G."/>
        </authorList>
    </citation>
    <scope>NUCLEOTIDE SEQUENCE [LARGE SCALE GENOMIC DNA]</scope>
    <source>
        <strain>CT18</strain>
    </source>
</reference>
<reference key="2">
    <citation type="journal article" date="2003" name="J. Bacteriol.">
        <title>Comparative genomics of Salmonella enterica serovar Typhi strains Ty2 and CT18.</title>
        <authorList>
            <person name="Deng W."/>
            <person name="Liou S.-R."/>
            <person name="Plunkett G. III"/>
            <person name="Mayhew G.F."/>
            <person name="Rose D.J."/>
            <person name="Burland V."/>
            <person name="Kodoyianni V."/>
            <person name="Schwartz D.C."/>
            <person name="Blattner F.R."/>
        </authorList>
    </citation>
    <scope>NUCLEOTIDE SEQUENCE [LARGE SCALE GENOMIC DNA]</scope>
    <source>
        <strain>ATCC 700931 / Ty2</strain>
    </source>
</reference>
<organism>
    <name type="scientific">Salmonella typhi</name>
    <dbReference type="NCBI Taxonomy" id="90370"/>
    <lineage>
        <taxon>Bacteria</taxon>
        <taxon>Pseudomonadati</taxon>
        <taxon>Pseudomonadota</taxon>
        <taxon>Gammaproteobacteria</taxon>
        <taxon>Enterobacterales</taxon>
        <taxon>Enterobacteriaceae</taxon>
        <taxon>Salmonella</taxon>
    </lineage>
</organism>
<sequence length="116" mass="12476">MERQPTTDRMIQEYVPGKQVTLAHLIANPGKDLFKKLGLQDAVSAIGILTITPSEASIIACDIATKSGAVEIGFLDRFTGAVVLTGDVSAVEYALKQVTRTLGEMMQFTTCSITRT</sequence>
<accession>P0A1D2</accession>
<accession>Q9XDM7</accession>
<feature type="chain" id="PRO_0000201525" description="Bacterial microcompartment shell protein PduU">
    <location>
        <begin position="1"/>
        <end position="116"/>
    </location>
</feature>
<feature type="domain" description="BMC circularly permuted" evidence="4">
    <location>
        <begin position="9"/>
        <end position="108"/>
    </location>
</feature>
<gene>
    <name type="primary">pduU</name>
    <name type="ordered locus">STY2260</name>
    <name type="ordered locus">t0819</name>
</gene>
<evidence type="ECO:0000250" key="1">
    <source>
        <dbReference type="UniProtKB" id="A0A0E2IV13"/>
    </source>
</evidence>
<evidence type="ECO:0000250" key="2">
    <source>
        <dbReference type="UniProtKB" id="P0A1D1"/>
    </source>
</evidence>
<evidence type="ECO:0000250" key="3">
    <source>
        <dbReference type="UniProtKB" id="P0DUV8"/>
    </source>
</evidence>
<evidence type="ECO:0000255" key="4">
    <source>
        <dbReference type="PROSITE-ProRule" id="PRU01279"/>
    </source>
</evidence>
<evidence type="ECO:0000305" key="5"/>
<protein>
    <recommendedName>
        <fullName evidence="5">Bacterial microcompartment shell protein PduU</fullName>
    </recommendedName>
    <alternativeName>
        <fullName evidence="5">Bacterial microcompartment protein homohexamer</fullName>
        <shortName evidence="5">BMC-H</shortName>
    </alternativeName>
    <alternativeName>
        <fullName>Propanediol utilization protein PduU</fullName>
    </alternativeName>
</protein>
<keyword id="KW-1283">Bacterial microcompartment</keyword>
<keyword id="KW-0813">Transport</keyword>
<comment type="function">
    <text evidence="2 5">A minor shell protein of the bacterial microcompartment (BMC) dedicated to 1,2-propanediol (1,2-PD) degradation. May selectively transport specific metabolites. Not absolutely required to make artificial BMCs (By similarity). Proteins such as this one with circularly permuted BMC domains may play a key role in conferring heterogeneity and flexibility in this BMC (Probable).</text>
</comment>
<comment type="pathway">
    <text evidence="2">Polyol metabolism; 1,2-propanediol degradation.</text>
</comment>
<comment type="subunit">
    <text evidence="2 3">Homohexamer with a central pore lined by a beta-barrel. Hexamers pack into a loose array. Interacts with PduV, probably via the beta-barrel, which is predicted by modeling to be on the exterior of the BMC (By similarity). Interacts with shell protein PduA (By similarity).</text>
</comment>
<comment type="subcellular location">
    <subcellularLocation>
        <location evidence="2">Bacterial microcompartment</location>
    </subcellularLocation>
</comment>
<comment type="induction">
    <text evidence="2">By propanediol.</text>
</comment>
<comment type="domain">
    <text evidence="1">One side of the hexamer is concave which is lined by hydrophobic residues, the other side has a slightly protruding, 6-stranded beta-barrel.</text>
</comment>
<comment type="similarity">
    <text evidence="4 5">Belongs to the EutS/PduU family.</text>
</comment>